<gene>
    <name evidence="4" type="primary">Slc35b3</name>
</gene>
<dbReference type="EMBL" id="AK076592">
    <property type="protein sequence ID" value="BAC36405.1"/>
    <property type="molecule type" value="mRNA"/>
</dbReference>
<dbReference type="EMBL" id="AK077208">
    <property type="protein sequence ID" value="BAC36684.1"/>
    <property type="molecule type" value="mRNA"/>
</dbReference>
<dbReference type="EMBL" id="AK141280">
    <property type="protein sequence ID" value="BAE24633.1"/>
    <property type="molecule type" value="mRNA"/>
</dbReference>
<dbReference type="EMBL" id="BC006881">
    <property type="protein sequence ID" value="AAH06881.1"/>
    <property type="molecule type" value="mRNA"/>
</dbReference>
<dbReference type="CCDS" id="CCDS26466.1"/>
<dbReference type="RefSeq" id="NP_001163901.1">
    <property type="nucleotide sequence ID" value="NM_001170430.2"/>
</dbReference>
<dbReference type="RefSeq" id="NP_001163902.2">
    <property type="nucleotide sequence ID" value="NM_001170431.3"/>
</dbReference>
<dbReference type="RefSeq" id="NP_001389945.1">
    <property type="nucleotide sequence ID" value="NM_001403016.1"/>
</dbReference>
<dbReference type="RefSeq" id="NP_598821.1">
    <property type="nucleotide sequence ID" value="NM_134060.5"/>
</dbReference>
<dbReference type="RefSeq" id="XP_017170845.1">
    <property type="nucleotide sequence ID" value="XM_017315356.1"/>
</dbReference>
<dbReference type="SMR" id="Q922Q5"/>
<dbReference type="BioGRID" id="224354">
    <property type="interactions" value="1"/>
</dbReference>
<dbReference type="FunCoup" id="Q922Q5">
    <property type="interactions" value="2871"/>
</dbReference>
<dbReference type="STRING" id="10090.ENSMUSP00000021870"/>
<dbReference type="GlyCosmos" id="Q922Q5">
    <property type="glycosylation" value="2 sites, No reported glycans"/>
</dbReference>
<dbReference type="GlyGen" id="Q922Q5">
    <property type="glycosylation" value="2 sites"/>
</dbReference>
<dbReference type="iPTMnet" id="Q922Q5"/>
<dbReference type="PhosphoSitePlus" id="Q922Q5"/>
<dbReference type="PaxDb" id="10090-ENSMUSP00000021870"/>
<dbReference type="ProteomicsDB" id="256556"/>
<dbReference type="Antibodypedia" id="24732">
    <property type="antibodies" value="9 antibodies from 5 providers"/>
</dbReference>
<dbReference type="DNASU" id="108652"/>
<dbReference type="Ensembl" id="ENSMUST00000167513.3">
    <property type="protein sequence ID" value="ENSMUSP00000126016.2"/>
    <property type="gene ID" value="ENSMUSG00000021432.16"/>
</dbReference>
<dbReference type="Ensembl" id="ENSMUST00000225432.2">
    <property type="protein sequence ID" value="ENSMUSP00000153046.2"/>
    <property type="gene ID" value="ENSMUSG00000021432.16"/>
</dbReference>
<dbReference type="GeneID" id="108652"/>
<dbReference type="KEGG" id="mmu:108652"/>
<dbReference type="UCSC" id="uc007qdy.2">
    <property type="organism name" value="mouse"/>
</dbReference>
<dbReference type="AGR" id="MGI:1913978"/>
<dbReference type="CTD" id="51000"/>
<dbReference type="MGI" id="MGI:1913978">
    <property type="gene designation" value="Slc35b3"/>
</dbReference>
<dbReference type="VEuPathDB" id="HostDB:ENSMUSG00000021432"/>
<dbReference type="eggNOG" id="KOG1582">
    <property type="taxonomic scope" value="Eukaryota"/>
</dbReference>
<dbReference type="GeneTree" id="ENSGT00940000157040"/>
<dbReference type="HOGENOM" id="CLU_036019_2_0_1"/>
<dbReference type="InParanoid" id="Q922Q5"/>
<dbReference type="OMA" id="YNRTTQF"/>
<dbReference type="OrthoDB" id="438495at2759"/>
<dbReference type="PhylomeDB" id="Q922Q5"/>
<dbReference type="Reactome" id="R-MMU-174362">
    <property type="pathway name" value="Transport and synthesis of PAPS"/>
</dbReference>
<dbReference type="Reactome" id="R-MMU-727802">
    <property type="pathway name" value="Transport of nucleotide sugars"/>
</dbReference>
<dbReference type="BioGRID-ORCS" id="108652">
    <property type="hits" value="1 hit in 76 CRISPR screens"/>
</dbReference>
<dbReference type="ChiTaRS" id="Slc35b3">
    <property type="organism name" value="mouse"/>
</dbReference>
<dbReference type="PRO" id="PR:Q922Q5"/>
<dbReference type="Proteomes" id="UP000000589">
    <property type="component" value="Chromosome 13"/>
</dbReference>
<dbReference type="RNAct" id="Q922Q5">
    <property type="molecule type" value="protein"/>
</dbReference>
<dbReference type="Bgee" id="ENSMUSG00000021432">
    <property type="expression patterns" value="Expressed in renal medulla collecting duct and 248 other cell types or tissues"/>
</dbReference>
<dbReference type="ExpressionAtlas" id="Q922Q5">
    <property type="expression patterns" value="baseline and differential"/>
</dbReference>
<dbReference type="GO" id="GO:0000139">
    <property type="term" value="C:Golgi membrane"/>
    <property type="evidence" value="ECO:0000314"/>
    <property type="project" value="MGI"/>
</dbReference>
<dbReference type="GO" id="GO:0005739">
    <property type="term" value="C:mitochondrion"/>
    <property type="evidence" value="ECO:0007005"/>
    <property type="project" value="MGI"/>
</dbReference>
<dbReference type="GO" id="GO:0005802">
    <property type="term" value="C:trans-Golgi network"/>
    <property type="evidence" value="ECO:0000314"/>
    <property type="project" value="MGI"/>
</dbReference>
<dbReference type="GO" id="GO:0046964">
    <property type="term" value="F:3'-phosphoadenosine 5'-phosphosulfate transmembrane transporter activity"/>
    <property type="evidence" value="ECO:0000314"/>
    <property type="project" value="MGI"/>
</dbReference>
<dbReference type="GO" id="GO:0015297">
    <property type="term" value="F:antiporter activity"/>
    <property type="evidence" value="ECO:0007669"/>
    <property type="project" value="UniProtKB-KW"/>
</dbReference>
<dbReference type="GO" id="GO:1902558">
    <property type="term" value="P:5'-adenylyl sulfate transmembrane transport"/>
    <property type="evidence" value="ECO:0000314"/>
    <property type="project" value="MGI"/>
</dbReference>
<dbReference type="InterPro" id="IPR013657">
    <property type="entry name" value="SCL35B1-4/HUT1"/>
</dbReference>
<dbReference type="PANTHER" id="PTHR10778:SF8">
    <property type="entry name" value="ADENOSINE 3'-PHOSPHO 5'-PHOSPHOSULFATE TRANSPORTER 2"/>
    <property type="match status" value="1"/>
</dbReference>
<dbReference type="PANTHER" id="PTHR10778">
    <property type="entry name" value="SOLUTE CARRIER FAMILY 35 MEMBER B"/>
    <property type="match status" value="1"/>
</dbReference>
<dbReference type="Pfam" id="PF08449">
    <property type="entry name" value="UAA"/>
    <property type="match status" value="1"/>
</dbReference>
<protein>
    <recommendedName>
        <fullName evidence="3">Adenosine 3'-phospho 5'-phosphosulfate transporter 2</fullName>
    </recommendedName>
    <alternativeName>
        <fullName evidence="4">Solute carrier family 35 member B3</fullName>
    </alternativeName>
</protein>
<accession>Q922Q5</accession>
<feature type="chain" id="PRO_0000213380" description="Adenosine 3'-phospho 5'-phosphosulfate transporter 2">
    <location>
        <begin position="1"/>
        <end position="369"/>
    </location>
</feature>
<feature type="transmembrane region" description="Helical" evidence="2">
    <location>
        <begin position="46"/>
        <end position="66"/>
    </location>
</feature>
<feature type="transmembrane region" description="Helical" evidence="2">
    <location>
        <begin position="79"/>
        <end position="99"/>
    </location>
</feature>
<feature type="transmembrane region" description="Helical" evidence="2">
    <location>
        <begin position="115"/>
        <end position="135"/>
    </location>
</feature>
<feature type="transmembrane region" description="Helical" evidence="2">
    <location>
        <begin position="138"/>
        <end position="158"/>
    </location>
</feature>
<feature type="transmembrane region" description="Helical" evidence="2">
    <location>
        <begin position="168"/>
        <end position="188"/>
    </location>
</feature>
<feature type="transmembrane region" description="Helical" evidence="2">
    <location>
        <begin position="191"/>
        <end position="211"/>
    </location>
</feature>
<feature type="transmembrane region" description="Helical" evidence="2">
    <location>
        <begin position="235"/>
        <end position="255"/>
    </location>
</feature>
<feature type="transmembrane region" description="Helical" evidence="2">
    <location>
        <begin position="266"/>
        <end position="285"/>
    </location>
</feature>
<feature type="transmembrane region" description="Helical" evidence="2">
    <location>
        <begin position="292"/>
        <end position="314"/>
    </location>
</feature>
<feature type="transmembrane region" description="Helical" evidence="2">
    <location>
        <begin position="317"/>
        <end position="337"/>
    </location>
</feature>
<feature type="glycosylation site" description="N-linked (GlcNAc...) asparagine" evidence="2">
    <location>
        <position position="39"/>
    </location>
</feature>
<feature type="glycosylation site" description="N-linked (GlcNAc...) asparagine" evidence="2">
    <location>
        <position position="222"/>
    </location>
</feature>
<proteinExistence type="evidence at transcript level"/>
<evidence type="ECO:0000250" key="1">
    <source>
        <dbReference type="UniProtKB" id="Q9H1N7"/>
    </source>
</evidence>
<evidence type="ECO:0000255" key="2"/>
<evidence type="ECO:0000305" key="3"/>
<evidence type="ECO:0000312" key="4">
    <source>
        <dbReference type="MGI" id="MGI:1913978"/>
    </source>
</evidence>
<organism>
    <name type="scientific">Mus musculus</name>
    <name type="common">Mouse</name>
    <dbReference type="NCBI Taxonomy" id="10090"/>
    <lineage>
        <taxon>Eukaryota</taxon>
        <taxon>Metazoa</taxon>
        <taxon>Chordata</taxon>
        <taxon>Craniata</taxon>
        <taxon>Vertebrata</taxon>
        <taxon>Euteleostomi</taxon>
        <taxon>Mammalia</taxon>
        <taxon>Eutheria</taxon>
        <taxon>Euarchontoglires</taxon>
        <taxon>Glires</taxon>
        <taxon>Rodentia</taxon>
        <taxon>Myomorpha</taxon>
        <taxon>Muroidea</taxon>
        <taxon>Muridae</taxon>
        <taxon>Murinae</taxon>
        <taxon>Mus</taxon>
        <taxon>Mus</taxon>
    </lineage>
</organism>
<reference key="1">
    <citation type="journal article" date="2005" name="Science">
        <title>The transcriptional landscape of the mammalian genome.</title>
        <authorList>
            <person name="Carninci P."/>
            <person name="Kasukawa T."/>
            <person name="Katayama S."/>
            <person name="Gough J."/>
            <person name="Frith M.C."/>
            <person name="Maeda N."/>
            <person name="Oyama R."/>
            <person name="Ravasi T."/>
            <person name="Lenhard B."/>
            <person name="Wells C."/>
            <person name="Kodzius R."/>
            <person name="Shimokawa K."/>
            <person name="Bajic V.B."/>
            <person name="Brenner S.E."/>
            <person name="Batalov S."/>
            <person name="Forrest A.R."/>
            <person name="Zavolan M."/>
            <person name="Davis M.J."/>
            <person name="Wilming L.G."/>
            <person name="Aidinis V."/>
            <person name="Allen J.E."/>
            <person name="Ambesi-Impiombato A."/>
            <person name="Apweiler R."/>
            <person name="Aturaliya R.N."/>
            <person name="Bailey T.L."/>
            <person name="Bansal M."/>
            <person name="Baxter L."/>
            <person name="Beisel K.W."/>
            <person name="Bersano T."/>
            <person name="Bono H."/>
            <person name="Chalk A.M."/>
            <person name="Chiu K.P."/>
            <person name="Choudhary V."/>
            <person name="Christoffels A."/>
            <person name="Clutterbuck D.R."/>
            <person name="Crowe M.L."/>
            <person name="Dalla E."/>
            <person name="Dalrymple B.P."/>
            <person name="de Bono B."/>
            <person name="Della Gatta G."/>
            <person name="di Bernardo D."/>
            <person name="Down T."/>
            <person name="Engstrom P."/>
            <person name="Fagiolini M."/>
            <person name="Faulkner G."/>
            <person name="Fletcher C.F."/>
            <person name="Fukushima T."/>
            <person name="Furuno M."/>
            <person name="Futaki S."/>
            <person name="Gariboldi M."/>
            <person name="Georgii-Hemming P."/>
            <person name="Gingeras T.R."/>
            <person name="Gojobori T."/>
            <person name="Green R.E."/>
            <person name="Gustincich S."/>
            <person name="Harbers M."/>
            <person name="Hayashi Y."/>
            <person name="Hensch T.K."/>
            <person name="Hirokawa N."/>
            <person name="Hill D."/>
            <person name="Huminiecki L."/>
            <person name="Iacono M."/>
            <person name="Ikeo K."/>
            <person name="Iwama A."/>
            <person name="Ishikawa T."/>
            <person name="Jakt M."/>
            <person name="Kanapin A."/>
            <person name="Katoh M."/>
            <person name="Kawasawa Y."/>
            <person name="Kelso J."/>
            <person name="Kitamura H."/>
            <person name="Kitano H."/>
            <person name="Kollias G."/>
            <person name="Krishnan S.P."/>
            <person name="Kruger A."/>
            <person name="Kummerfeld S.K."/>
            <person name="Kurochkin I.V."/>
            <person name="Lareau L.F."/>
            <person name="Lazarevic D."/>
            <person name="Lipovich L."/>
            <person name="Liu J."/>
            <person name="Liuni S."/>
            <person name="McWilliam S."/>
            <person name="Madan Babu M."/>
            <person name="Madera M."/>
            <person name="Marchionni L."/>
            <person name="Matsuda H."/>
            <person name="Matsuzawa S."/>
            <person name="Miki H."/>
            <person name="Mignone F."/>
            <person name="Miyake S."/>
            <person name="Morris K."/>
            <person name="Mottagui-Tabar S."/>
            <person name="Mulder N."/>
            <person name="Nakano N."/>
            <person name="Nakauchi H."/>
            <person name="Ng P."/>
            <person name="Nilsson R."/>
            <person name="Nishiguchi S."/>
            <person name="Nishikawa S."/>
            <person name="Nori F."/>
            <person name="Ohara O."/>
            <person name="Okazaki Y."/>
            <person name="Orlando V."/>
            <person name="Pang K.C."/>
            <person name="Pavan W.J."/>
            <person name="Pavesi G."/>
            <person name="Pesole G."/>
            <person name="Petrovsky N."/>
            <person name="Piazza S."/>
            <person name="Reed J."/>
            <person name="Reid J.F."/>
            <person name="Ring B.Z."/>
            <person name="Ringwald M."/>
            <person name="Rost B."/>
            <person name="Ruan Y."/>
            <person name="Salzberg S.L."/>
            <person name="Sandelin A."/>
            <person name="Schneider C."/>
            <person name="Schoenbach C."/>
            <person name="Sekiguchi K."/>
            <person name="Semple C.A."/>
            <person name="Seno S."/>
            <person name="Sessa L."/>
            <person name="Sheng Y."/>
            <person name="Shibata Y."/>
            <person name="Shimada H."/>
            <person name="Shimada K."/>
            <person name="Silva D."/>
            <person name="Sinclair B."/>
            <person name="Sperling S."/>
            <person name="Stupka E."/>
            <person name="Sugiura K."/>
            <person name="Sultana R."/>
            <person name="Takenaka Y."/>
            <person name="Taki K."/>
            <person name="Tammoja K."/>
            <person name="Tan S.L."/>
            <person name="Tang S."/>
            <person name="Taylor M.S."/>
            <person name="Tegner J."/>
            <person name="Teichmann S.A."/>
            <person name="Ueda H.R."/>
            <person name="van Nimwegen E."/>
            <person name="Verardo R."/>
            <person name="Wei C.L."/>
            <person name="Yagi K."/>
            <person name="Yamanishi H."/>
            <person name="Zabarovsky E."/>
            <person name="Zhu S."/>
            <person name="Zimmer A."/>
            <person name="Hide W."/>
            <person name="Bult C."/>
            <person name="Grimmond S.M."/>
            <person name="Teasdale R.D."/>
            <person name="Liu E.T."/>
            <person name="Brusic V."/>
            <person name="Quackenbush J."/>
            <person name="Wahlestedt C."/>
            <person name="Mattick J.S."/>
            <person name="Hume D.A."/>
            <person name="Kai C."/>
            <person name="Sasaki D."/>
            <person name="Tomaru Y."/>
            <person name="Fukuda S."/>
            <person name="Kanamori-Katayama M."/>
            <person name="Suzuki M."/>
            <person name="Aoki J."/>
            <person name="Arakawa T."/>
            <person name="Iida J."/>
            <person name="Imamura K."/>
            <person name="Itoh M."/>
            <person name="Kato T."/>
            <person name="Kawaji H."/>
            <person name="Kawagashira N."/>
            <person name="Kawashima T."/>
            <person name="Kojima M."/>
            <person name="Kondo S."/>
            <person name="Konno H."/>
            <person name="Nakano K."/>
            <person name="Ninomiya N."/>
            <person name="Nishio T."/>
            <person name="Okada M."/>
            <person name="Plessy C."/>
            <person name="Shibata K."/>
            <person name="Shiraki T."/>
            <person name="Suzuki S."/>
            <person name="Tagami M."/>
            <person name="Waki K."/>
            <person name="Watahiki A."/>
            <person name="Okamura-Oho Y."/>
            <person name="Suzuki H."/>
            <person name="Kawai J."/>
            <person name="Hayashizaki Y."/>
        </authorList>
    </citation>
    <scope>NUCLEOTIDE SEQUENCE [LARGE SCALE MRNA]</scope>
    <source>
        <strain>C57BL/6J</strain>
        <tissue>Testis</tissue>
    </source>
</reference>
<reference key="2">
    <citation type="journal article" date="2004" name="Genome Res.">
        <title>The status, quality, and expansion of the NIH full-length cDNA project: the Mammalian Gene Collection (MGC).</title>
        <authorList>
            <consortium name="The MGC Project Team"/>
        </authorList>
    </citation>
    <scope>NUCLEOTIDE SEQUENCE [LARGE SCALE MRNA]</scope>
    <source>
        <strain>FVB/N</strain>
        <tissue>Mammary tumor</tissue>
    </source>
</reference>
<sequence>MDLKFNNSRKYVSISVPSKTQAMSPHIKSVEDVVVLGVNLSKFSKLTQFLICVAGVFVFYLIYGYLQELIFSVEGFKPYGWYLTLVQFAFYSVFGLIELQLTQDRRRRIPGKTYMLIAFLTVGTMGLSNTSLGYLNYPTQVIFKCCKLIPVMLGGVFIQGKRYNLADVSAAVCMSLGLIWFTLADSTIAPNFNLTGVMLISLALCADAVIGNVQEKAMKLHNASNSEMVLYSYSIGFVYILLGLSCTSGLGPAVAFCSKNPVGTYGYAFLFSLTGYFGISFVLALIKIFGALLAVTVTTGRKAMTVVLSFLFFAKPFTFQYIWSGLLVVLGIFLNVYSKNMDKIRLPSVYNMIKKAMDMKKSRTLAQTV</sequence>
<name>S35B3_MOUSE</name>
<comment type="function">
    <text evidence="1">Probably functions as a 3'-phosphoadenylyl sulfate:adenosine 3',5'-bisphosphate antiporter at the Golgi membranes. Mediates the transport from the cytosol into the lumen of the Golgi of 3'-phosphoadenylyl sulfate/adenosine 3'-phospho 5'-phosphosulfate (PAPS), a universal sulfuryl donor for sulfation events that take place in that compartment.</text>
</comment>
<comment type="catalytic activity">
    <reaction evidence="1">
        <text>3'-phosphoadenylyl sulfate(in) + adenosine 3',5'-bisphosphate(out) = 3'-phosphoadenylyl sulfate(out) + adenosine 3',5'-bisphosphate(in)</text>
        <dbReference type="Rhea" id="RHEA:76063"/>
        <dbReference type="ChEBI" id="CHEBI:58339"/>
        <dbReference type="ChEBI" id="CHEBI:58343"/>
    </reaction>
</comment>
<comment type="subcellular location">
    <subcellularLocation>
        <location evidence="1">Golgi apparatus membrane</location>
        <topology evidence="2">Multi-pass membrane protein</topology>
    </subcellularLocation>
</comment>
<comment type="similarity">
    <text evidence="3">Belongs to the nucleotide-sugar transporter family. SLC35B subfamily.</text>
</comment>
<keyword id="KW-0050">Antiport</keyword>
<keyword id="KW-0325">Glycoprotein</keyword>
<keyword id="KW-0333">Golgi apparatus</keyword>
<keyword id="KW-0472">Membrane</keyword>
<keyword id="KW-1185">Reference proteome</keyword>
<keyword id="KW-0812">Transmembrane</keyword>
<keyword id="KW-1133">Transmembrane helix</keyword>
<keyword id="KW-0813">Transport</keyword>